<keyword id="KW-1005">Bacterial flagellum biogenesis</keyword>
<keyword id="KW-0678">Repressor</keyword>
<keyword id="KW-0694">RNA-binding</keyword>
<evidence type="ECO:0000255" key="1">
    <source>
        <dbReference type="HAMAP-Rule" id="MF_00783"/>
    </source>
</evidence>
<protein>
    <recommendedName>
        <fullName evidence="1">Probable flagellum biosynthesis repressor protein FlbT</fullName>
    </recommendedName>
</protein>
<feature type="chain" id="PRO_1000133721" description="Probable flagellum biosynthesis repressor protein FlbT">
    <location>
        <begin position="1"/>
        <end position="152"/>
    </location>
</feature>
<accession>B2SCB2</accession>
<gene>
    <name evidence="1" type="primary">flbT</name>
    <name type="ordered locus">BAbS19_II10190</name>
</gene>
<organism>
    <name type="scientific">Brucella abortus (strain S19)</name>
    <dbReference type="NCBI Taxonomy" id="430066"/>
    <lineage>
        <taxon>Bacteria</taxon>
        <taxon>Pseudomonadati</taxon>
        <taxon>Pseudomonadota</taxon>
        <taxon>Alphaproteobacteria</taxon>
        <taxon>Hyphomicrobiales</taxon>
        <taxon>Brucellaceae</taxon>
        <taxon>Brucella/Ochrobactrum group</taxon>
        <taxon>Brucella</taxon>
    </lineage>
</organism>
<sequence>MAANSKTAIRLSLRAGERIFINGAVLRADRKVSLELLNDATFLLENHVLQPEDTTTPLRQLYFAAQMMLIEPAMREQAGATFAQMLKGMFAMFKDAEILNALKLVDELVHNGRVFEALKTIRAQYPREAELMGAQPVVWPVTKSGKSAGANP</sequence>
<dbReference type="EMBL" id="CP000888">
    <property type="protein sequence ID" value="ACD74499.1"/>
    <property type="molecule type" value="Genomic_DNA"/>
</dbReference>
<dbReference type="RefSeq" id="WP_002966648.1">
    <property type="nucleotide sequence ID" value="NC_010740.1"/>
</dbReference>
<dbReference type="GeneID" id="93016074"/>
<dbReference type="KEGG" id="bmc:BAbS19_II10190"/>
<dbReference type="HOGENOM" id="CLU_130913_1_0_5"/>
<dbReference type="Proteomes" id="UP000002565">
    <property type="component" value="Chromosome 2"/>
</dbReference>
<dbReference type="GO" id="GO:0048027">
    <property type="term" value="F:mRNA 5'-UTR binding"/>
    <property type="evidence" value="ECO:0007669"/>
    <property type="project" value="UniProtKB-UniRule"/>
</dbReference>
<dbReference type="GO" id="GO:0044781">
    <property type="term" value="P:bacterial-type flagellum organization"/>
    <property type="evidence" value="ECO:0007669"/>
    <property type="project" value="UniProtKB-KW"/>
</dbReference>
<dbReference type="GO" id="GO:0006402">
    <property type="term" value="P:mRNA catabolic process"/>
    <property type="evidence" value="ECO:0007669"/>
    <property type="project" value="InterPro"/>
</dbReference>
<dbReference type="GO" id="GO:1902209">
    <property type="term" value="P:negative regulation of bacterial-type flagellum assembly"/>
    <property type="evidence" value="ECO:0007669"/>
    <property type="project" value="UniProtKB-UniRule"/>
</dbReference>
<dbReference type="HAMAP" id="MF_00783">
    <property type="entry name" value="FlbT"/>
    <property type="match status" value="1"/>
</dbReference>
<dbReference type="InterPro" id="IPR009967">
    <property type="entry name" value="Flagellum_FlbT"/>
</dbReference>
<dbReference type="NCBIfam" id="NF001995">
    <property type="entry name" value="PRK00794.1-1"/>
    <property type="match status" value="1"/>
</dbReference>
<dbReference type="Pfam" id="PF07378">
    <property type="entry name" value="FlbT"/>
    <property type="match status" value="1"/>
</dbReference>
<dbReference type="PIRSF" id="PIRSF009533">
    <property type="entry name" value="FlbT"/>
    <property type="match status" value="1"/>
</dbReference>
<name>FLBT_BRUA1</name>
<proteinExistence type="inferred from homology"/>
<reference key="1">
    <citation type="journal article" date="2008" name="PLoS ONE">
        <title>Genome sequence of Brucella abortus vaccine strain S19 compared to virulent strains yields candidate virulence genes.</title>
        <authorList>
            <person name="Crasta O.R."/>
            <person name="Folkerts O."/>
            <person name="Fei Z."/>
            <person name="Mane S.P."/>
            <person name="Evans C."/>
            <person name="Martino-Catt S."/>
            <person name="Bricker B."/>
            <person name="Yu G."/>
            <person name="Du L."/>
            <person name="Sobral B.W."/>
        </authorList>
    </citation>
    <scope>NUCLEOTIDE SEQUENCE [LARGE SCALE GENOMIC DNA]</scope>
    <source>
        <strain>S19</strain>
    </source>
</reference>
<comment type="function">
    <text evidence="1">Has a post-transcriptional repressor function in flagellum biogenesis. Associates with the 5'-UTR of fljK mRNA and promotes its degradation.</text>
</comment>
<comment type="similarity">
    <text evidence="1">Belongs to the FlbT family.</text>
</comment>